<keyword id="KW-0046">Antibiotic resistance</keyword>
<keyword id="KW-0428">Leader peptide</keyword>
<sequence>MTHSMRLRFPTLNQ</sequence>
<dbReference type="EMBL" id="L08389">
    <property type="protein sequence ID" value="AAA22596.1"/>
    <property type="molecule type" value="Genomic_DNA"/>
</dbReference>
<dbReference type="GO" id="GO:0046677">
    <property type="term" value="P:response to antibiotic"/>
    <property type="evidence" value="ECO:0007669"/>
    <property type="project" value="UniProtKB-KW"/>
</dbReference>
<dbReference type="InterPro" id="IPR012559">
    <property type="entry name" value="Emycin-R_leader_pep2"/>
</dbReference>
<dbReference type="Pfam" id="PF08057">
    <property type="entry name" value="Ery_res_leader2"/>
    <property type="match status" value="1"/>
</dbReference>
<accession>P62187</accession>
<accession>Q04303</accession>
<organism>
    <name type="scientific">Bacillus anthracis</name>
    <dbReference type="NCBI Taxonomy" id="1392"/>
    <lineage>
        <taxon>Bacteria</taxon>
        <taxon>Bacillati</taxon>
        <taxon>Bacillota</taxon>
        <taxon>Bacilli</taxon>
        <taxon>Bacillales</taxon>
        <taxon>Bacillaceae</taxon>
        <taxon>Bacillus</taxon>
        <taxon>Bacillus cereus group</taxon>
    </lineage>
</organism>
<reference key="1">
    <citation type="journal article" date="1993" name="J. Gen. Microbiol.">
        <title>A macrolide-lincosamide-streptogramin B resistance determinant from Bacillus anthracis 590: cloning and expression of ermJ.</title>
        <authorList>
            <person name="Kim H.-S."/>
            <person name="Choi E.-C."/>
            <person name="Kim B.-K."/>
        </authorList>
    </citation>
    <scope>NUCLEOTIDE SEQUENCE [GENOMIC DNA]</scope>
    <source>
        <strain>590</strain>
    </source>
</reference>
<feature type="peptide" id="PRO_0000043976" description="Erythromycin resistance leader peptide">
    <location>
        <begin position="1"/>
        <end position="14"/>
    </location>
</feature>
<proteinExistence type="predicted"/>
<comment type="function">
    <text>This peptide is involved in the control mechanism of the synthesis of the macrolide-lincosamide-streptogramin B resistance protein. It acts as a transcriptional attenuator.</text>
</comment>
<name>LPER_BACAN</name>
<protein>
    <recommendedName>
        <fullName>Erythromycin resistance leader peptide</fullName>
    </recommendedName>
    <alternativeName>
        <fullName>23S rRNA methylase leader peptide</fullName>
    </alternativeName>
</protein>